<dbReference type="EMBL" id="AF156596">
    <property type="protein sequence ID" value="AAK61820.1"/>
    <property type="molecule type" value="mRNA"/>
</dbReference>
<dbReference type="EMBL" id="AF380941">
    <property type="protein sequence ID" value="AAK57517.1"/>
    <property type="molecule type" value="Genomic_DNA"/>
</dbReference>
<dbReference type="SMR" id="Q95P88"/>
<dbReference type="GO" id="GO:0005576">
    <property type="term" value="C:extracellular region"/>
    <property type="evidence" value="ECO:0007669"/>
    <property type="project" value="UniProtKB-SubCell"/>
</dbReference>
<dbReference type="GO" id="GO:0042742">
    <property type="term" value="P:defense response to bacterium"/>
    <property type="evidence" value="ECO:0007669"/>
    <property type="project" value="UniProtKB-KW"/>
</dbReference>
<protein>
    <recommendedName>
        <fullName>Defensin-like peptide TXKs2</fullName>
        <shortName>BmTXKs2</shortName>
    </recommendedName>
</protein>
<reference key="1">
    <citation type="journal article" date="2000" name="IUBMB Life">
        <title>Evidence for the existence of insect defensin-like peptide in scorpion venom.</title>
        <authorList>
            <person name="Zhu S."/>
            <person name="Li W."/>
            <person name="Jiang D."/>
            <person name="Zeng X."/>
        </authorList>
    </citation>
    <scope>NUCLEOTIDE SEQUENCE [MRNA]</scope>
    <source>
        <tissue>Venom gland</tissue>
    </source>
</reference>
<reference key="2">
    <citation type="submission" date="2001-05" db="EMBL/GenBank/DDBJ databases">
        <title>Genomic sequence of BmTXKS2.</title>
        <authorList>
            <person name="Shunyi Z."/>
            <person name="Wenxin L."/>
        </authorList>
    </citation>
    <scope>NUCLEOTIDE SEQUENCE [GENOMIC DNA]</scope>
</reference>
<comment type="function">
    <text evidence="1">Antibacterial protein.</text>
</comment>
<comment type="subcellular location">
    <subcellularLocation>
        <location evidence="1">Secreted</location>
    </subcellularLocation>
</comment>
<comment type="tissue specificity">
    <text>Expressed by the venom gland.</text>
</comment>
<comment type="similarity">
    <text evidence="3">Belongs to the invertebrate defensin family.</text>
</comment>
<evidence type="ECO:0000250" key="1"/>
<evidence type="ECO:0000255" key="2"/>
<evidence type="ECO:0000305" key="3"/>
<sequence length="61" mass="6747">MTYAILIIVSLLLISDRISNVVDKYCSENPLDCNEHCLKTKNQIGICHGANGNEKCSCMES</sequence>
<name>DEF_OLIMR</name>
<feature type="signal peptide" evidence="2">
    <location>
        <begin position="1"/>
        <end position="19"/>
    </location>
</feature>
<feature type="propeptide" id="PRO_0000428822" evidence="1">
    <location>
        <begin position="20"/>
        <end position="22"/>
    </location>
</feature>
<feature type="chain" id="PRO_0000428823" description="Defensin-like peptide TXKs2">
    <location>
        <begin position="23"/>
        <end position="61"/>
    </location>
</feature>
<feature type="disulfide bond" evidence="1">
    <location>
        <begin position="26"/>
        <end position="47"/>
    </location>
</feature>
<feature type="disulfide bond" evidence="1">
    <location>
        <begin position="33"/>
        <end position="56"/>
    </location>
</feature>
<feature type="disulfide bond" evidence="1">
    <location>
        <begin position="37"/>
        <end position="58"/>
    </location>
</feature>
<feature type="sequence conflict" description="In Ref. 2; AAK57517." evidence="3" ref="2">
    <original>L</original>
    <variation>P</variation>
    <location>
        <position position="13"/>
    </location>
</feature>
<feature type="sequence conflict" description="In Ref. 2; AAK57517." evidence="3" ref="2">
    <original>R</original>
    <variation>G</variation>
    <location>
        <position position="17"/>
    </location>
</feature>
<proteinExistence type="evidence at transcript level"/>
<accession>Q95P88</accession>
<accession>Q967L8</accession>
<keyword id="KW-0044">Antibiotic</keyword>
<keyword id="KW-0929">Antimicrobial</keyword>
<keyword id="KW-0211">Defensin</keyword>
<keyword id="KW-1015">Disulfide bond</keyword>
<keyword id="KW-0964">Secreted</keyword>
<keyword id="KW-0732">Signal</keyword>
<organism>
    <name type="scientific">Olivierus martensii</name>
    <name type="common">Manchurian scorpion</name>
    <name type="synonym">Mesobuthus martensii</name>
    <dbReference type="NCBI Taxonomy" id="34649"/>
    <lineage>
        <taxon>Eukaryota</taxon>
        <taxon>Metazoa</taxon>
        <taxon>Ecdysozoa</taxon>
        <taxon>Arthropoda</taxon>
        <taxon>Chelicerata</taxon>
        <taxon>Arachnida</taxon>
        <taxon>Scorpiones</taxon>
        <taxon>Buthida</taxon>
        <taxon>Buthoidea</taxon>
        <taxon>Buthidae</taxon>
        <taxon>Olivierus</taxon>
    </lineage>
</organism>